<organism>
    <name type="scientific">Lactobacillus delbrueckii subsp. bulgaricus (strain ATCC BAA-365 / Lb-18)</name>
    <dbReference type="NCBI Taxonomy" id="321956"/>
    <lineage>
        <taxon>Bacteria</taxon>
        <taxon>Bacillati</taxon>
        <taxon>Bacillota</taxon>
        <taxon>Bacilli</taxon>
        <taxon>Lactobacillales</taxon>
        <taxon>Lactobacillaceae</taxon>
        <taxon>Lactobacillus</taxon>
    </lineage>
</organism>
<name>MURD_LACDB</name>
<protein>
    <recommendedName>
        <fullName evidence="1">UDP-N-acetylmuramoylalanine--D-glutamate ligase</fullName>
        <ecNumber evidence="1">6.3.2.9</ecNumber>
    </recommendedName>
    <alternativeName>
        <fullName evidence="1">D-glutamic acid-adding enzyme</fullName>
    </alternativeName>
    <alternativeName>
        <fullName evidence="1">UDP-N-acetylmuramoyl-L-alanyl-D-glutamate synthetase</fullName>
    </alternativeName>
</protein>
<keyword id="KW-0067">ATP-binding</keyword>
<keyword id="KW-0131">Cell cycle</keyword>
<keyword id="KW-0132">Cell division</keyword>
<keyword id="KW-0133">Cell shape</keyword>
<keyword id="KW-0961">Cell wall biogenesis/degradation</keyword>
<keyword id="KW-0963">Cytoplasm</keyword>
<keyword id="KW-0436">Ligase</keyword>
<keyword id="KW-0547">Nucleotide-binding</keyword>
<keyword id="KW-0573">Peptidoglycan synthesis</keyword>
<evidence type="ECO:0000255" key="1">
    <source>
        <dbReference type="HAMAP-Rule" id="MF_00639"/>
    </source>
</evidence>
<proteinExistence type="inferred from homology"/>
<sequence>MKEIDKYAGKNILVLGLGRSGFAVSKLLLKLGARLTLNDKADLAADPKAKQLADLGVRVIGGSHPVDLFDEEKFDYLVKNPGIPYENPMVAKASEKGVPIITEPEVALSASESPYVCVTGSNGKTTTVMLTQQIMDHYLQKQGHHAYAVGNIGWPISEVVLNQAGPDDLLVVEMSSFQLMGVTDIEPKVAAIVDIYNNVHLDYHKTFDNYVDAKLNVGRFQKTSDYFLANFDQKDILAREEKATKAKILTFSENDPVADFYIGQDYLMHGEEKMMKIADIKLPGIHNLQNSLVAIGISSLMGAGKDDIAAVLSTFTGAEHRLQYVTTLDGVKVYNDSKSTNIEAATVAIQSFKQPEVLLAGGLDRGFVFDSLVDLFKKHVKAIVTYGETRYLLADAARKAGIKTIVVVDNLHEGVKAASKLAEAGDVLLFSPACASWDQFKTFEERGEYFVKYVKELEEK</sequence>
<dbReference type="EC" id="6.3.2.9" evidence="1"/>
<dbReference type="EMBL" id="CP000412">
    <property type="protein sequence ID" value="ABJ58299.1"/>
    <property type="molecule type" value="Genomic_DNA"/>
</dbReference>
<dbReference type="RefSeq" id="WP_011678136.1">
    <property type="nucleotide sequence ID" value="NC_008529.1"/>
</dbReference>
<dbReference type="SMR" id="Q04B73"/>
<dbReference type="KEGG" id="lbu:LBUL_0673"/>
<dbReference type="HOGENOM" id="CLU_032540_0_1_9"/>
<dbReference type="BioCyc" id="LDEL321956:LBUL_RS03210-MONOMER"/>
<dbReference type="UniPathway" id="UPA00219"/>
<dbReference type="GO" id="GO:0005737">
    <property type="term" value="C:cytoplasm"/>
    <property type="evidence" value="ECO:0007669"/>
    <property type="project" value="UniProtKB-SubCell"/>
</dbReference>
<dbReference type="GO" id="GO:0005524">
    <property type="term" value="F:ATP binding"/>
    <property type="evidence" value="ECO:0007669"/>
    <property type="project" value="UniProtKB-UniRule"/>
</dbReference>
<dbReference type="GO" id="GO:0008764">
    <property type="term" value="F:UDP-N-acetylmuramoylalanine-D-glutamate ligase activity"/>
    <property type="evidence" value="ECO:0007669"/>
    <property type="project" value="UniProtKB-UniRule"/>
</dbReference>
<dbReference type="GO" id="GO:0051301">
    <property type="term" value="P:cell division"/>
    <property type="evidence" value="ECO:0007669"/>
    <property type="project" value="UniProtKB-KW"/>
</dbReference>
<dbReference type="GO" id="GO:0071555">
    <property type="term" value="P:cell wall organization"/>
    <property type="evidence" value="ECO:0007669"/>
    <property type="project" value="UniProtKB-KW"/>
</dbReference>
<dbReference type="GO" id="GO:0009252">
    <property type="term" value="P:peptidoglycan biosynthetic process"/>
    <property type="evidence" value="ECO:0007669"/>
    <property type="project" value="UniProtKB-UniRule"/>
</dbReference>
<dbReference type="GO" id="GO:0008360">
    <property type="term" value="P:regulation of cell shape"/>
    <property type="evidence" value="ECO:0007669"/>
    <property type="project" value="UniProtKB-KW"/>
</dbReference>
<dbReference type="Gene3D" id="3.90.190.20">
    <property type="entry name" value="Mur ligase, C-terminal domain"/>
    <property type="match status" value="1"/>
</dbReference>
<dbReference type="Gene3D" id="3.40.1190.10">
    <property type="entry name" value="Mur-like, catalytic domain"/>
    <property type="match status" value="1"/>
</dbReference>
<dbReference type="Gene3D" id="3.40.50.720">
    <property type="entry name" value="NAD(P)-binding Rossmann-like Domain"/>
    <property type="match status" value="1"/>
</dbReference>
<dbReference type="HAMAP" id="MF_00639">
    <property type="entry name" value="MurD"/>
    <property type="match status" value="1"/>
</dbReference>
<dbReference type="InterPro" id="IPR036565">
    <property type="entry name" value="Mur-like_cat_sf"/>
</dbReference>
<dbReference type="InterPro" id="IPR004101">
    <property type="entry name" value="Mur_ligase_C"/>
</dbReference>
<dbReference type="InterPro" id="IPR036615">
    <property type="entry name" value="Mur_ligase_C_dom_sf"/>
</dbReference>
<dbReference type="InterPro" id="IPR013221">
    <property type="entry name" value="Mur_ligase_cen"/>
</dbReference>
<dbReference type="InterPro" id="IPR005762">
    <property type="entry name" value="MurD"/>
</dbReference>
<dbReference type="NCBIfam" id="TIGR01087">
    <property type="entry name" value="murD"/>
    <property type="match status" value="1"/>
</dbReference>
<dbReference type="PANTHER" id="PTHR43692">
    <property type="entry name" value="UDP-N-ACETYLMURAMOYLALANINE--D-GLUTAMATE LIGASE"/>
    <property type="match status" value="1"/>
</dbReference>
<dbReference type="PANTHER" id="PTHR43692:SF1">
    <property type="entry name" value="UDP-N-ACETYLMURAMOYLALANINE--D-GLUTAMATE LIGASE"/>
    <property type="match status" value="1"/>
</dbReference>
<dbReference type="Pfam" id="PF02875">
    <property type="entry name" value="Mur_ligase_C"/>
    <property type="match status" value="1"/>
</dbReference>
<dbReference type="Pfam" id="PF08245">
    <property type="entry name" value="Mur_ligase_M"/>
    <property type="match status" value="1"/>
</dbReference>
<dbReference type="Pfam" id="PF21799">
    <property type="entry name" value="MurD-like_N"/>
    <property type="match status" value="1"/>
</dbReference>
<dbReference type="SUPFAM" id="SSF51984">
    <property type="entry name" value="MurCD N-terminal domain"/>
    <property type="match status" value="1"/>
</dbReference>
<dbReference type="SUPFAM" id="SSF53623">
    <property type="entry name" value="MurD-like peptide ligases, catalytic domain"/>
    <property type="match status" value="1"/>
</dbReference>
<dbReference type="SUPFAM" id="SSF53244">
    <property type="entry name" value="MurD-like peptide ligases, peptide-binding domain"/>
    <property type="match status" value="1"/>
</dbReference>
<comment type="function">
    <text evidence="1">Cell wall formation. Catalyzes the addition of glutamate to the nucleotide precursor UDP-N-acetylmuramoyl-L-alanine (UMA).</text>
</comment>
<comment type="catalytic activity">
    <reaction evidence="1">
        <text>UDP-N-acetyl-alpha-D-muramoyl-L-alanine + D-glutamate + ATP = UDP-N-acetyl-alpha-D-muramoyl-L-alanyl-D-glutamate + ADP + phosphate + H(+)</text>
        <dbReference type="Rhea" id="RHEA:16429"/>
        <dbReference type="ChEBI" id="CHEBI:15378"/>
        <dbReference type="ChEBI" id="CHEBI:29986"/>
        <dbReference type="ChEBI" id="CHEBI:30616"/>
        <dbReference type="ChEBI" id="CHEBI:43474"/>
        <dbReference type="ChEBI" id="CHEBI:83898"/>
        <dbReference type="ChEBI" id="CHEBI:83900"/>
        <dbReference type="ChEBI" id="CHEBI:456216"/>
        <dbReference type="EC" id="6.3.2.9"/>
    </reaction>
</comment>
<comment type="pathway">
    <text evidence="1">Cell wall biogenesis; peptidoglycan biosynthesis.</text>
</comment>
<comment type="subcellular location">
    <subcellularLocation>
        <location evidence="1">Cytoplasm</location>
    </subcellularLocation>
</comment>
<comment type="similarity">
    <text evidence="1">Belongs to the MurCDEF family.</text>
</comment>
<feature type="chain" id="PRO_0000301430" description="UDP-N-acetylmuramoylalanine--D-glutamate ligase">
    <location>
        <begin position="1"/>
        <end position="460"/>
    </location>
</feature>
<feature type="binding site" evidence="1">
    <location>
        <begin position="120"/>
        <end position="126"/>
    </location>
    <ligand>
        <name>ATP</name>
        <dbReference type="ChEBI" id="CHEBI:30616"/>
    </ligand>
</feature>
<accession>Q04B73</accession>
<reference key="1">
    <citation type="journal article" date="2006" name="Proc. Natl. Acad. Sci. U.S.A.">
        <title>Comparative genomics of the lactic acid bacteria.</title>
        <authorList>
            <person name="Makarova K.S."/>
            <person name="Slesarev A."/>
            <person name="Wolf Y.I."/>
            <person name="Sorokin A."/>
            <person name="Mirkin B."/>
            <person name="Koonin E.V."/>
            <person name="Pavlov A."/>
            <person name="Pavlova N."/>
            <person name="Karamychev V."/>
            <person name="Polouchine N."/>
            <person name="Shakhova V."/>
            <person name="Grigoriev I."/>
            <person name="Lou Y."/>
            <person name="Rohksar D."/>
            <person name="Lucas S."/>
            <person name="Huang K."/>
            <person name="Goodstein D.M."/>
            <person name="Hawkins T."/>
            <person name="Plengvidhya V."/>
            <person name="Welker D."/>
            <person name="Hughes J."/>
            <person name="Goh Y."/>
            <person name="Benson A."/>
            <person name="Baldwin K."/>
            <person name="Lee J.-H."/>
            <person name="Diaz-Muniz I."/>
            <person name="Dosti B."/>
            <person name="Smeianov V."/>
            <person name="Wechter W."/>
            <person name="Barabote R."/>
            <person name="Lorca G."/>
            <person name="Altermann E."/>
            <person name="Barrangou R."/>
            <person name="Ganesan B."/>
            <person name="Xie Y."/>
            <person name="Rawsthorne H."/>
            <person name="Tamir D."/>
            <person name="Parker C."/>
            <person name="Breidt F."/>
            <person name="Broadbent J.R."/>
            <person name="Hutkins R."/>
            <person name="O'Sullivan D."/>
            <person name="Steele J."/>
            <person name="Unlu G."/>
            <person name="Saier M.H. Jr."/>
            <person name="Klaenhammer T."/>
            <person name="Richardson P."/>
            <person name="Kozyavkin S."/>
            <person name="Weimer B.C."/>
            <person name="Mills D.A."/>
        </authorList>
    </citation>
    <scope>NUCLEOTIDE SEQUENCE [LARGE SCALE GENOMIC DNA]</scope>
    <source>
        <strain>ATCC BAA-365 / Lb-18</strain>
    </source>
</reference>
<gene>
    <name evidence="1" type="primary">murD</name>
    <name type="ordered locus">LBUL_0673</name>
</gene>